<feature type="chain" id="PRO_1000024467" description="UPF0473 protein CLB_2502">
    <location>
        <begin position="1"/>
        <end position="84"/>
    </location>
</feature>
<sequence>MDNNVDTITLTDEEGKETEFEVITKLDIEDKEYVVVVPKNEEVDEAIALRIDNNDNGEEVLVPVEEDEEFNMVAEAYELLFSEE</sequence>
<name>Y2502_CLOB1</name>
<accession>A7FWJ2</accession>
<comment type="similarity">
    <text evidence="1">Belongs to the UPF0473 family.</text>
</comment>
<reference key="1">
    <citation type="journal article" date="2007" name="PLoS ONE">
        <title>Analysis of the neurotoxin complex genes in Clostridium botulinum A1-A4 and B1 strains: BoNT/A3, /Ba4 and /B1 clusters are located within plasmids.</title>
        <authorList>
            <person name="Smith T.J."/>
            <person name="Hill K.K."/>
            <person name="Foley B.T."/>
            <person name="Detter J.C."/>
            <person name="Munk A.C."/>
            <person name="Bruce D.C."/>
            <person name="Doggett N.A."/>
            <person name="Smith L.A."/>
            <person name="Marks J.D."/>
            <person name="Xie G."/>
            <person name="Brettin T.S."/>
        </authorList>
    </citation>
    <scope>NUCLEOTIDE SEQUENCE [LARGE SCALE GENOMIC DNA]</scope>
    <source>
        <strain>ATCC 19397 / Type A</strain>
    </source>
</reference>
<gene>
    <name type="ordered locus">CLB_2502</name>
</gene>
<dbReference type="EMBL" id="CP000726">
    <property type="protein sequence ID" value="ABS34073.1"/>
    <property type="molecule type" value="Genomic_DNA"/>
</dbReference>
<dbReference type="RefSeq" id="WP_011986884.1">
    <property type="nucleotide sequence ID" value="NC_009697.1"/>
</dbReference>
<dbReference type="SMR" id="A7FWJ2"/>
<dbReference type="KEGG" id="cba:CLB_2502"/>
<dbReference type="HOGENOM" id="CLU_146610_8_0_9"/>
<dbReference type="HAMAP" id="MF_01448">
    <property type="entry name" value="UPF0473"/>
    <property type="match status" value="1"/>
</dbReference>
<dbReference type="InterPro" id="IPR009711">
    <property type="entry name" value="UPF0473"/>
</dbReference>
<dbReference type="PANTHER" id="PTHR40066">
    <property type="entry name" value="UPF0473 PROTEIN CBO2561/CLC_2432"/>
    <property type="match status" value="1"/>
</dbReference>
<dbReference type="PANTHER" id="PTHR40066:SF1">
    <property type="entry name" value="UPF0473 PROTEIN CBO2561_CLC_2432"/>
    <property type="match status" value="1"/>
</dbReference>
<dbReference type="Pfam" id="PF06949">
    <property type="entry name" value="DUF1292"/>
    <property type="match status" value="1"/>
</dbReference>
<evidence type="ECO:0000255" key="1">
    <source>
        <dbReference type="HAMAP-Rule" id="MF_01448"/>
    </source>
</evidence>
<proteinExistence type="inferred from homology"/>
<organism>
    <name type="scientific">Clostridium botulinum (strain ATCC 19397 / Type A)</name>
    <dbReference type="NCBI Taxonomy" id="441770"/>
    <lineage>
        <taxon>Bacteria</taxon>
        <taxon>Bacillati</taxon>
        <taxon>Bacillota</taxon>
        <taxon>Clostridia</taxon>
        <taxon>Eubacteriales</taxon>
        <taxon>Clostridiaceae</taxon>
        <taxon>Clostridium</taxon>
    </lineage>
</organism>
<protein>
    <recommendedName>
        <fullName evidence="1">UPF0473 protein CLB_2502</fullName>
    </recommendedName>
</protein>